<sequence>MLEEALEHLVKGIVDNPDDVQVASRNLRRGRVLEVRVHPDDLGKVIGRNGRTARALRTVVGAIGGRGVRVDLVDVDHVR</sequence>
<organism>
    <name type="scientific">Streptomyces coelicolor (strain ATCC BAA-471 / A3(2) / M145)</name>
    <dbReference type="NCBI Taxonomy" id="100226"/>
    <lineage>
        <taxon>Bacteria</taxon>
        <taxon>Bacillati</taxon>
        <taxon>Actinomycetota</taxon>
        <taxon>Actinomycetes</taxon>
        <taxon>Kitasatosporales</taxon>
        <taxon>Streptomycetaceae</taxon>
        <taxon>Streptomyces</taxon>
        <taxon>Streptomyces albidoflavus group</taxon>
    </lineage>
</organism>
<gene>
    <name evidence="1" type="primary">khpA</name>
    <name type="ordered locus">SCO5592</name>
    <name type="ORF">SC2E1.09</name>
</gene>
<comment type="function">
    <text evidence="1">A probable RNA-binding protein.</text>
</comment>
<comment type="subcellular location">
    <subcellularLocation>
        <location evidence="1">Cytoplasm</location>
    </subcellularLocation>
    <subcellularLocation>
        <location evidence="2">Cytoplasm</location>
        <location evidence="2">Nucleoid</location>
    </subcellularLocation>
</comment>
<comment type="similarity">
    <text evidence="1">Belongs to the KhpA RNA-binding protein family.</text>
</comment>
<reference key="1">
    <citation type="journal article" date="2002" name="Nature">
        <title>Complete genome sequence of the model actinomycete Streptomyces coelicolor A3(2).</title>
        <authorList>
            <person name="Bentley S.D."/>
            <person name="Chater K.F."/>
            <person name="Cerdeno-Tarraga A.-M."/>
            <person name="Challis G.L."/>
            <person name="Thomson N.R."/>
            <person name="James K.D."/>
            <person name="Harris D.E."/>
            <person name="Quail M.A."/>
            <person name="Kieser H."/>
            <person name="Harper D."/>
            <person name="Bateman A."/>
            <person name="Brown S."/>
            <person name="Chandra G."/>
            <person name="Chen C.W."/>
            <person name="Collins M."/>
            <person name="Cronin A."/>
            <person name="Fraser A."/>
            <person name="Goble A."/>
            <person name="Hidalgo J."/>
            <person name="Hornsby T."/>
            <person name="Howarth S."/>
            <person name="Huang C.-H."/>
            <person name="Kieser T."/>
            <person name="Larke L."/>
            <person name="Murphy L.D."/>
            <person name="Oliver K."/>
            <person name="O'Neil S."/>
            <person name="Rabbinowitsch E."/>
            <person name="Rajandream M.A."/>
            <person name="Rutherford K.M."/>
            <person name="Rutter S."/>
            <person name="Seeger K."/>
            <person name="Saunders D."/>
            <person name="Sharp S."/>
            <person name="Squares R."/>
            <person name="Squares S."/>
            <person name="Taylor K."/>
            <person name="Warren T."/>
            <person name="Wietzorrek A."/>
            <person name="Woodward J.R."/>
            <person name="Barrell B.G."/>
            <person name="Parkhill J."/>
            <person name="Hopwood D.A."/>
        </authorList>
    </citation>
    <scope>NUCLEOTIDE SEQUENCE [LARGE SCALE GENOMIC DNA]</scope>
    <source>
        <strain>ATCC BAA-471 / A3(2) / M145</strain>
    </source>
</reference>
<reference key="2">
    <citation type="journal article" date="2013" name="J. Proteomics">
        <title>Proteomic survey of the Streptomyces coelicolor nucleoid.</title>
        <authorList>
            <person name="Bradshaw E."/>
            <person name="Saalbach G."/>
            <person name="McArthur M."/>
        </authorList>
    </citation>
    <scope>IDENTIFICATION BY MASS SPECTROMETRY</scope>
    <scope>SUBCELLULAR LOCATION</scope>
    <source>
        <strain>ATCC BAA-471 / A3(2) / M145</strain>
    </source>
</reference>
<proteinExistence type="evidence at protein level"/>
<keyword id="KW-0963">Cytoplasm</keyword>
<keyword id="KW-1185">Reference proteome</keyword>
<keyword id="KW-0694">RNA-binding</keyword>
<name>KHPA_STRCO</name>
<feature type="chain" id="PRO_0000163234" description="RNA-binding protein KhpA">
    <location>
        <begin position="1"/>
        <end position="79"/>
    </location>
</feature>
<feature type="domain" description="KH" evidence="1">
    <location>
        <begin position="30"/>
        <end position="79"/>
    </location>
</feature>
<dbReference type="EMBL" id="AL939124">
    <property type="protein sequence ID" value="CAA19384.1"/>
    <property type="molecule type" value="Genomic_DNA"/>
</dbReference>
<dbReference type="PIR" id="T34777">
    <property type="entry name" value="T34777"/>
</dbReference>
<dbReference type="RefSeq" id="NP_629726.1">
    <property type="nucleotide sequence ID" value="NC_003888.3"/>
</dbReference>
<dbReference type="RefSeq" id="WP_003973401.1">
    <property type="nucleotide sequence ID" value="NZ_VNID01000034.1"/>
</dbReference>
<dbReference type="SMR" id="P0A4Q4"/>
<dbReference type="FunCoup" id="P0A4Q4">
    <property type="interactions" value="22"/>
</dbReference>
<dbReference type="STRING" id="100226.gene:17763250"/>
<dbReference type="PaxDb" id="100226-SCO5592"/>
<dbReference type="KEGG" id="sco:SCO5592"/>
<dbReference type="PATRIC" id="fig|100226.15.peg.5684"/>
<dbReference type="eggNOG" id="COG1837">
    <property type="taxonomic scope" value="Bacteria"/>
</dbReference>
<dbReference type="HOGENOM" id="CLU_132074_3_0_11"/>
<dbReference type="InParanoid" id="P0A4Q4"/>
<dbReference type="OrthoDB" id="9812389at2"/>
<dbReference type="PhylomeDB" id="P0A4Q4"/>
<dbReference type="PRO" id="PR:P0A4Q4"/>
<dbReference type="Proteomes" id="UP000001973">
    <property type="component" value="Chromosome"/>
</dbReference>
<dbReference type="GO" id="GO:0005737">
    <property type="term" value="C:cytoplasm"/>
    <property type="evidence" value="ECO:0007669"/>
    <property type="project" value="UniProtKB-SubCell"/>
</dbReference>
<dbReference type="GO" id="GO:0009295">
    <property type="term" value="C:nucleoid"/>
    <property type="evidence" value="ECO:0007669"/>
    <property type="project" value="UniProtKB-SubCell"/>
</dbReference>
<dbReference type="GO" id="GO:0003723">
    <property type="term" value="F:RNA binding"/>
    <property type="evidence" value="ECO:0007669"/>
    <property type="project" value="UniProtKB-UniRule"/>
</dbReference>
<dbReference type="CDD" id="cd22533">
    <property type="entry name" value="KH-II_YlqC-like"/>
    <property type="match status" value="1"/>
</dbReference>
<dbReference type="Gene3D" id="3.30.300.20">
    <property type="match status" value="1"/>
</dbReference>
<dbReference type="HAMAP" id="MF_00088">
    <property type="entry name" value="KhpA"/>
    <property type="match status" value="1"/>
</dbReference>
<dbReference type="InterPro" id="IPR015946">
    <property type="entry name" value="KH_dom-like_a/b"/>
</dbReference>
<dbReference type="InterPro" id="IPR009019">
    <property type="entry name" value="KH_sf_prok-type"/>
</dbReference>
<dbReference type="InterPro" id="IPR020627">
    <property type="entry name" value="KhpA"/>
</dbReference>
<dbReference type="NCBIfam" id="NF002761">
    <property type="entry name" value="PRK02821.1"/>
    <property type="match status" value="1"/>
</dbReference>
<dbReference type="PANTHER" id="PTHR34654:SF1">
    <property type="entry name" value="RNA-BINDING PROTEIN KHPA"/>
    <property type="match status" value="1"/>
</dbReference>
<dbReference type="PANTHER" id="PTHR34654">
    <property type="entry name" value="UPF0109 PROTEIN SCO5592"/>
    <property type="match status" value="1"/>
</dbReference>
<dbReference type="Pfam" id="PF13083">
    <property type="entry name" value="KH_KhpA-B"/>
    <property type="match status" value="1"/>
</dbReference>
<dbReference type="SUPFAM" id="SSF54814">
    <property type="entry name" value="Prokaryotic type KH domain (KH-domain type II)"/>
    <property type="match status" value="1"/>
</dbReference>
<dbReference type="PROSITE" id="PS50084">
    <property type="entry name" value="KH_TYPE_1"/>
    <property type="match status" value="1"/>
</dbReference>
<evidence type="ECO:0000255" key="1">
    <source>
        <dbReference type="HAMAP-Rule" id="MF_00088"/>
    </source>
</evidence>
<evidence type="ECO:0000305" key="2">
    <source>
    </source>
</evidence>
<accession>P0A4Q4</accession>
<accession>O69880</accession>
<protein>
    <recommendedName>
        <fullName evidence="1">RNA-binding protein KhpA</fullName>
    </recommendedName>
    <alternativeName>
        <fullName evidence="1">KH-domain protein A</fullName>
    </alternativeName>
</protein>